<protein>
    <recommendedName>
        <fullName evidence="1">ATP synthase epsilon chain</fullName>
    </recommendedName>
    <alternativeName>
        <fullName evidence="1">ATP synthase F1 sector epsilon subunit</fullName>
    </alternativeName>
    <alternativeName>
        <fullName evidence="1">F-ATPase epsilon subunit</fullName>
    </alternativeName>
</protein>
<organism>
    <name type="scientific">Rhodopseudomonas palustris (strain ATCC BAA-98 / CGA009)</name>
    <dbReference type="NCBI Taxonomy" id="258594"/>
    <lineage>
        <taxon>Bacteria</taxon>
        <taxon>Pseudomonadati</taxon>
        <taxon>Pseudomonadota</taxon>
        <taxon>Alphaproteobacteria</taxon>
        <taxon>Hyphomicrobiales</taxon>
        <taxon>Nitrobacteraceae</taxon>
        <taxon>Rhodopseudomonas</taxon>
    </lineage>
</organism>
<reference key="1">
    <citation type="journal article" date="2004" name="Nat. Biotechnol.">
        <title>Complete genome sequence of the metabolically versatile photosynthetic bacterium Rhodopseudomonas palustris.</title>
        <authorList>
            <person name="Larimer F.W."/>
            <person name="Chain P."/>
            <person name="Hauser L."/>
            <person name="Lamerdin J.E."/>
            <person name="Malfatti S."/>
            <person name="Do L."/>
            <person name="Land M.L."/>
            <person name="Pelletier D.A."/>
            <person name="Beatty J.T."/>
            <person name="Lang A.S."/>
            <person name="Tabita F.R."/>
            <person name="Gibson J.L."/>
            <person name="Hanson T.E."/>
            <person name="Bobst C."/>
            <person name="Torres y Torres J.L."/>
            <person name="Peres C."/>
            <person name="Harrison F.H."/>
            <person name="Gibson J."/>
            <person name="Harwood C.S."/>
        </authorList>
    </citation>
    <scope>NUCLEOTIDE SEQUENCE [LARGE SCALE GENOMIC DNA]</scope>
    <source>
        <strain>ATCC BAA-98 / CGA009</strain>
    </source>
</reference>
<accession>Q6NDD3</accession>
<keyword id="KW-0066">ATP synthesis</keyword>
<keyword id="KW-0997">Cell inner membrane</keyword>
<keyword id="KW-1003">Cell membrane</keyword>
<keyword id="KW-0139">CF(1)</keyword>
<keyword id="KW-0375">Hydrogen ion transport</keyword>
<keyword id="KW-0406">Ion transport</keyword>
<keyword id="KW-0472">Membrane</keyword>
<keyword id="KW-0813">Transport</keyword>
<gene>
    <name evidence="1" type="primary">atpC</name>
    <name type="ordered locus">RPA0175</name>
</gene>
<name>ATPE_RHOPA</name>
<feature type="chain" id="PRO_0000188190" description="ATP synthase epsilon chain">
    <location>
        <begin position="1"/>
        <end position="135"/>
    </location>
</feature>
<sequence length="135" mass="14258">MSTFHFDLVSPEMVAFSGDVDQVDIPGAEGDFGVLAGHAPVVAVIRPGILTVTAGANKQKIVVLGGIAEVSDKGLTVLADVATPAPDVDLQDFAATIQTMEQQIPGKVGDELDRAIERLDHFKSIQHELNTTAMH</sequence>
<dbReference type="EMBL" id="BX572593">
    <property type="protein sequence ID" value="CAE25619.1"/>
    <property type="molecule type" value="Genomic_DNA"/>
</dbReference>
<dbReference type="RefSeq" id="WP_011155743.1">
    <property type="nucleotide sequence ID" value="NZ_CP116810.1"/>
</dbReference>
<dbReference type="SMR" id="Q6NDD3"/>
<dbReference type="STRING" id="258594.RPA0175"/>
<dbReference type="GeneID" id="66891180"/>
<dbReference type="eggNOG" id="COG0355">
    <property type="taxonomic scope" value="Bacteria"/>
</dbReference>
<dbReference type="HOGENOM" id="CLU_084338_2_1_5"/>
<dbReference type="PhylomeDB" id="Q6NDD3"/>
<dbReference type="GO" id="GO:0005886">
    <property type="term" value="C:plasma membrane"/>
    <property type="evidence" value="ECO:0007669"/>
    <property type="project" value="UniProtKB-SubCell"/>
</dbReference>
<dbReference type="GO" id="GO:0045259">
    <property type="term" value="C:proton-transporting ATP synthase complex"/>
    <property type="evidence" value="ECO:0007669"/>
    <property type="project" value="UniProtKB-KW"/>
</dbReference>
<dbReference type="GO" id="GO:0005524">
    <property type="term" value="F:ATP binding"/>
    <property type="evidence" value="ECO:0007669"/>
    <property type="project" value="UniProtKB-UniRule"/>
</dbReference>
<dbReference type="GO" id="GO:0046933">
    <property type="term" value="F:proton-transporting ATP synthase activity, rotational mechanism"/>
    <property type="evidence" value="ECO:0007669"/>
    <property type="project" value="UniProtKB-UniRule"/>
</dbReference>
<dbReference type="CDD" id="cd12152">
    <property type="entry name" value="F1-ATPase_delta"/>
    <property type="match status" value="1"/>
</dbReference>
<dbReference type="Gene3D" id="2.60.15.10">
    <property type="entry name" value="F0F1 ATP synthase delta/epsilon subunit, N-terminal"/>
    <property type="match status" value="1"/>
</dbReference>
<dbReference type="HAMAP" id="MF_00530">
    <property type="entry name" value="ATP_synth_epsil_bac"/>
    <property type="match status" value="1"/>
</dbReference>
<dbReference type="InterPro" id="IPR001469">
    <property type="entry name" value="ATP_synth_F1_dsu/esu"/>
</dbReference>
<dbReference type="InterPro" id="IPR020546">
    <property type="entry name" value="ATP_synth_F1_dsu/esu_N"/>
</dbReference>
<dbReference type="InterPro" id="IPR036771">
    <property type="entry name" value="ATPsynth_dsu/esu_N"/>
</dbReference>
<dbReference type="NCBIfam" id="TIGR01216">
    <property type="entry name" value="ATP_synt_epsi"/>
    <property type="match status" value="1"/>
</dbReference>
<dbReference type="NCBIfam" id="NF009982">
    <property type="entry name" value="PRK13448.1"/>
    <property type="match status" value="1"/>
</dbReference>
<dbReference type="PANTHER" id="PTHR13822">
    <property type="entry name" value="ATP SYNTHASE DELTA/EPSILON CHAIN"/>
    <property type="match status" value="1"/>
</dbReference>
<dbReference type="PANTHER" id="PTHR13822:SF10">
    <property type="entry name" value="ATP SYNTHASE EPSILON CHAIN, CHLOROPLASTIC"/>
    <property type="match status" value="1"/>
</dbReference>
<dbReference type="Pfam" id="PF02823">
    <property type="entry name" value="ATP-synt_DE_N"/>
    <property type="match status" value="1"/>
</dbReference>
<dbReference type="SUPFAM" id="SSF51344">
    <property type="entry name" value="Epsilon subunit of F1F0-ATP synthase N-terminal domain"/>
    <property type="match status" value="1"/>
</dbReference>
<comment type="function">
    <text evidence="1">Produces ATP from ADP in the presence of a proton gradient across the membrane.</text>
</comment>
<comment type="subunit">
    <text>F-type ATPases have 2 components, CF(1) - the catalytic core - and CF(0) - the membrane proton channel. CF(1) has five subunits: alpha(3), beta(3), gamma(1), delta(1), epsilon(1). CF(0) has three main subunits: a, b and c.</text>
</comment>
<comment type="subcellular location">
    <subcellularLocation>
        <location evidence="1">Cell inner membrane</location>
        <topology evidence="1">Peripheral membrane protein</topology>
    </subcellularLocation>
</comment>
<comment type="similarity">
    <text evidence="1">Belongs to the ATPase epsilon chain family.</text>
</comment>
<proteinExistence type="inferred from homology"/>
<evidence type="ECO:0000255" key="1">
    <source>
        <dbReference type="HAMAP-Rule" id="MF_00530"/>
    </source>
</evidence>